<sequence>MESTLIILAVLVVAVLGRANTVALAASLLLVLKLLQVDQYIFPFIEKGGTFWGLVLLIAAILVPLARGTVTLRDLGHVFLSWVGLSAFILSLITTYMSGQGLQYLTVQGHSEVMPALILGAVIAAAFLGGVPVGPFITSGVLALLVKLIAKL</sequence>
<comment type="subcellular location">
    <subcellularLocation>
        <location evidence="1">Cell membrane</location>
        <topology evidence="1">Multi-pass membrane protein</topology>
    </subcellularLocation>
</comment>
<comment type="similarity">
    <text evidence="1">Belongs to the UPF0756 family.</text>
</comment>
<organism>
    <name type="scientific">Moorella thermoacetica (strain ATCC 39073 / JCM 9320)</name>
    <dbReference type="NCBI Taxonomy" id="264732"/>
    <lineage>
        <taxon>Bacteria</taxon>
        <taxon>Bacillati</taxon>
        <taxon>Bacillota</taxon>
        <taxon>Clostridia</taxon>
        <taxon>Moorellales</taxon>
        <taxon>Moorellaceae</taxon>
        <taxon>Moorella</taxon>
    </lineage>
</organism>
<dbReference type="EMBL" id="CP000232">
    <property type="protein sequence ID" value="ABC19323.1"/>
    <property type="molecule type" value="Genomic_DNA"/>
</dbReference>
<dbReference type="RefSeq" id="YP_429866.1">
    <property type="nucleotide sequence ID" value="NC_007644.1"/>
</dbReference>
<dbReference type="STRING" id="264732.Moth_1009"/>
<dbReference type="EnsemblBacteria" id="ABC19323">
    <property type="protein sequence ID" value="ABC19323"/>
    <property type="gene ID" value="Moth_1009"/>
</dbReference>
<dbReference type="KEGG" id="mta:Moth_1009"/>
<dbReference type="PATRIC" id="fig|264732.11.peg.1085"/>
<dbReference type="eggNOG" id="COG2707">
    <property type="taxonomic scope" value="Bacteria"/>
</dbReference>
<dbReference type="HOGENOM" id="CLU_125889_1_0_9"/>
<dbReference type="OrthoDB" id="80306at2"/>
<dbReference type="GO" id="GO:0005886">
    <property type="term" value="C:plasma membrane"/>
    <property type="evidence" value="ECO:0007669"/>
    <property type="project" value="UniProtKB-SubCell"/>
</dbReference>
<dbReference type="HAMAP" id="MF_01874">
    <property type="entry name" value="UPF0756"/>
    <property type="match status" value="1"/>
</dbReference>
<dbReference type="InterPro" id="IPR007382">
    <property type="entry name" value="UPF0756_TM"/>
</dbReference>
<dbReference type="PANTHER" id="PTHR38452">
    <property type="entry name" value="UPF0756 MEMBRANE PROTEIN YEAL"/>
    <property type="match status" value="1"/>
</dbReference>
<dbReference type="PANTHER" id="PTHR38452:SF1">
    <property type="entry name" value="UPF0756 MEMBRANE PROTEIN YEAL"/>
    <property type="match status" value="1"/>
</dbReference>
<dbReference type="Pfam" id="PF04284">
    <property type="entry name" value="DUF441"/>
    <property type="match status" value="1"/>
</dbReference>
<feature type="chain" id="PRO_5000105758" description="UPF0756 membrane protein Moth_1009">
    <location>
        <begin position="1"/>
        <end position="152"/>
    </location>
</feature>
<feature type="transmembrane region" description="Helical" evidence="1">
    <location>
        <begin position="5"/>
        <end position="25"/>
    </location>
</feature>
<feature type="transmembrane region" description="Helical" evidence="1">
    <location>
        <begin position="41"/>
        <end position="61"/>
    </location>
</feature>
<feature type="transmembrane region" description="Helical" evidence="1">
    <location>
        <begin position="75"/>
        <end position="95"/>
    </location>
</feature>
<feature type="transmembrane region" description="Helical" evidence="1">
    <location>
        <begin position="117"/>
        <end position="137"/>
    </location>
</feature>
<protein>
    <recommendedName>
        <fullName evidence="1">UPF0756 membrane protein Moth_1009</fullName>
    </recommendedName>
</protein>
<accession>Q2RJR6</accession>
<reference key="1">
    <citation type="journal article" date="2008" name="Environ. Microbiol.">
        <title>The complete genome sequence of Moorella thermoacetica (f. Clostridium thermoaceticum).</title>
        <authorList>
            <person name="Pierce E."/>
            <person name="Xie G."/>
            <person name="Barabote R.D."/>
            <person name="Saunders E."/>
            <person name="Han C.S."/>
            <person name="Detter J.C."/>
            <person name="Richardson P."/>
            <person name="Brettin T.S."/>
            <person name="Das A."/>
            <person name="Ljungdahl L.G."/>
            <person name="Ragsdale S.W."/>
        </authorList>
    </citation>
    <scope>NUCLEOTIDE SEQUENCE [LARGE SCALE GENOMIC DNA]</scope>
    <source>
        <strain>ATCC 39073 / JCM 9320</strain>
    </source>
</reference>
<evidence type="ECO:0000255" key="1">
    <source>
        <dbReference type="HAMAP-Rule" id="MF_01874"/>
    </source>
</evidence>
<name>Y1009_MOOTA</name>
<gene>
    <name type="ordered locus">Moth_1009</name>
</gene>
<keyword id="KW-1003">Cell membrane</keyword>
<keyword id="KW-0472">Membrane</keyword>
<keyword id="KW-0812">Transmembrane</keyword>
<keyword id="KW-1133">Transmembrane helix</keyword>
<proteinExistence type="inferred from homology"/>